<evidence type="ECO:0000250" key="1"/>
<evidence type="ECO:0000255" key="2">
    <source>
        <dbReference type="HAMAP-Rule" id="MF_00062"/>
    </source>
</evidence>
<feature type="chain" id="PRO_1000008905" description="Sulfate adenylyltransferase subunit 1">
    <location>
        <begin position="1"/>
        <end position="475"/>
    </location>
</feature>
<feature type="domain" description="tr-type G">
    <location>
        <begin position="25"/>
        <end position="241"/>
    </location>
</feature>
<feature type="region of interest" description="G1" evidence="1">
    <location>
        <begin position="34"/>
        <end position="41"/>
    </location>
</feature>
<feature type="region of interest" description="G2" evidence="1">
    <location>
        <begin position="92"/>
        <end position="96"/>
    </location>
</feature>
<feature type="region of interest" description="G3" evidence="1">
    <location>
        <begin position="113"/>
        <end position="116"/>
    </location>
</feature>
<feature type="region of interest" description="G4" evidence="1">
    <location>
        <begin position="168"/>
        <end position="171"/>
    </location>
</feature>
<feature type="region of interest" description="G5" evidence="1">
    <location>
        <begin position="206"/>
        <end position="208"/>
    </location>
</feature>
<feature type="binding site" evidence="2">
    <location>
        <begin position="34"/>
        <end position="41"/>
    </location>
    <ligand>
        <name>GTP</name>
        <dbReference type="ChEBI" id="CHEBI:37565"/>
    </ligand>
</feature>
<feature type="binding site" evidence="2">
    <location>
        <begin position="113"/>
        <end position="117"/>
    </location>
    <ligand>
        <name>GTP</name>
        <dbReference type="ChEBI" id="CHEBI:37565"/>
    </ligand>
</feature>
<feature type="binding site" evidence="2">
    <location>
        <begin position="168"/>
        <end position="171"/>
    </location>
    <ligand>
        <name>GTP</name>
        <dbReference type="ChEBI" id="CHEBI:37565"/>
    </ligand>
</feature>
<organism>
    <name type="scientific">Cronobacter sakazakii (strain ATCC BAA-894)</name>
    <name type="common">Enterobacter sakazakii</name>
    <dbReference type="NCBI Taxonomy" id="290339"/>
    <lineage>
        <taxon>Bacteria</taxon>
        <taxon>Pseudomonadati</taxon>
        <taxon>Pseudomonadota</taxon>
        <taxon>Gammaproteobacteria</taxon>
        <taxon>Enterobacterales</taxon>
        <taxon>Enterobacteriaceae</taxon>
        <taxon>Cronobacter</taxon>
    </lineage>
</organism>
<name>CYSN_CROS8</name>
<reference key="1">
    <citation type="journal article" date="2010" name="PLoS ONE">
        <title>Genome sequence of Cronobacter sakazakii BAA-894 and comparative genomic hybridization analysis with other Cronobacter species.</title>
        <authorList>
            <person name="Kucerova E."/>
            <person name="Clifton S.W."/>
            <person name="Xia X.Q."/>
            <person name="Long F."/>
            <person name="Porwollik S."/>
            <person name="Fulton L."/>
            <person name="Fronick C."/>
            <person name="Minx P."/>
            <person name="Kyung K."/>
            <person name="Warren W."/>
            <person name="Fulton R."/>
            <person name="Feng D."/>
            <person name="Wollam A."/>
            <person name="Shah N."/>
            <person name="Bhonagiri V."/>
            <person name="Nash W.E."/>
            <person name="Hallsworth-Pepin K."/>
            <person name="Wilson R.K."/>
            <person name="McClelland M."/>
            <person name="Forsythe S.J."/>
        </authorList>
    </citation>
    <scope>NUCLEOTIDE SEQUENCE [LARGE SCALE GENOMIC DNA]</scope>
    <source>
        <strain>ATCC BAA-894</strain>
    </source>
</reference>
<gene>
    <name evidence="2" type="primary">cysN</name>
    <name type="ordered locus">ESA_00540</name>
</gene>
<proteinExistence type="inferred from homology"/>
<dbReference type="EC" id="2.7.7.4" evidence="2"/>
<dbReference type="EMBL" id="CP000783">
    <property type="protein sequence ID" value="ABU75831.1"/>
    <property type="molecule type" value="Genomic_DNA"/>
</dbReference>
<dbReference type="RefSeq" id="WP_007777742.1">
    <property type="nucleotide sequence ID" value="NC_009778.1"/>
</dbReference>
<dbReference type="SMR" id="A7MJ69"/>
<dbReference type="GeneID" id="45714388"/>
<dbReference type="KEGG" id="esa:ESA_00540"/>
<dbReference type="HOGENOM" id="CLU_007265_5_2_6"/>
<dbReference type="UniPathway" id="UPA00140">
    <property type="reaction ID" value="UER00204"/>
</dbReference>
<dbReference type="Proteomes" id="UP000000260">
    <property type="component" value="Chromosome"/>
</dbReference>
<dbReference type="GO" id="GO:0005524">
    <property type="term" value="F:ATP binding"/>
    <property type="evidence" value="ECO:0007669"/>
    <property type="project" value="UniProtKB-KW"/>
</dbReference>
<dbReference type="GO" id="GO:0005525">
    <property type="term" value="F:GTP binding"/>
    <property type="evidence" value="ECO:0007669"/>
    <property type="project" value="UniProtKB-UniRule"/>
</dbReference>
<dbReference type="GO" id="GO:0003924">
    <property type="term" value="F:GTPase activity"/>
    <property type="evidence" value="ECO:0007669"/>
    <property type="project" value="InterPro"/>
</dbReference>
<dbReference type="GO" id="GO:0004781">
    <property type="term" value="F:sulfate adenylyltransferase (ATP) activity"/>
    <property type="evidence" value="ECO:0007669"/>
    <property type="project" value="UniProtKB-UniRule"/>
</dbReference>
<dbReference type="GO" id="GO:0070814">
    <property type="term" value="P:hydrogen sulfide biosynthetic process"/>
    <property type="evidence" value="ECO:0007669"/>
    <property type="project" value="UniProtKB-UniRule"/>
</dbReference>
<dbReference type="GO" id="GO:0000103">
    <property type="term" value="P:sulfate assimilation"/>
    <property type="evidence" value="ECO:0007669"/>
    <property type="project" value="UniProtKB-UniRule"/>
</dbReference>
<dbReference type="CDD" id="cd04166">
    <property type="entry name" value="CysN_ATPS"/>
    <property type="match status" value="1"/>
</dbReference>
<dbReference type="CDD" id="cd03695">
    <property type="entry name" value="CysN_NodQ_II"/>
    <property type="match status" value="1"/>
</dbReference>
<dbReference type="CDD" id="cd04095">
    <property type="entry name" value="CysN_NoDQ_III"/>
    <property type="match status" value="1"/>
</dbReference>
<dbReference type="FunFam" id="2.40.30.10:FF:000027">
    <property type="entry name" value="Sulfate adenylyltransferase subunit 1"/>
    <property type="match status" value="1"/>
</dbReference>
<dbReference type="FunFam" id="2.40.30.10:FF:000031">
    <property type="entry name" value="Sulfate adenylyltransferase subunit 1"/>
    <property type="match status" value="1"/>
</dbReference>
<dbReference type="FunFam" id="3.40.50.300:FF:000119">
    <property type="entry name" value="Sulfate adenylyltransferase subunit 1"/>
    <property type="match status" value="1"/>
</dbReference>
<dbReference type="Gene3D" id="3.40.50.300">
    <property type="entry name" value="P-loop containing nucleotide triphosphate hydrolases"/>
    <property type="match status" value="1"/>
</dbReference>
<dbReference type="Gene3D" id="2.40.30.10">
    <property type="entry name" value="Translation factors"/>
    <property type="match status" value="2"/>
</dbReference>
<dbReference type="HAMAP" id="MF_00062">
    <property type="entry name" value="Sulf_adenylyltr_sub1"/>
    <property type="match status" value="1"/>
</dbReference>
<dbReference type="InterPro" id="IPR041757">
    <property type="entry name" value="CysN_GTP-bd"/>
</dbReference>
<dbReference type="InterPro" id="IPR044138">
    <property type="entry name" value="CysN_II"/>
</dbReference>
<dbReference type="InterPro" id="IPR044139">
    <property type="entry name" value="CysN_NoDQ_III"/>
</dbReference>
<dbReference type="InterPro" id="IPR031157">
    <property type="entry name" value="G_TR_CS"/>
</dbReference>
<dbReference type="InterPro" id="IPR054696">
    <property type="entry name" value="GTP-eEF1A_C"/>
</dbReference>
<dbReference type="InterPro" id="IPR027417">
    <property type="entry name" value="P-loop_NTPase"/>
</dbReference>
<dbReference type="InterPro" id="IPR005225">
    <property type="entry name" value="Small_GTP-bd"/>
</dbReference>
<dbReference type="InterPro" id="IPR011779">
    <property type="entry name" value="SO4_adenylTrfase_lsu"/>
</dbReference>
<dbReference type="InterPro" id="IPR000795">
    <property type="entry name" value="T_Tr_GTP-bd_dom"/>
</dbReference>
<dbReference type="InterPro" id="IPR050100">
    <property type="entry name" value="TRAFAC_GTPase_members"/>
</dbReference>
<dbReference type="InterPro" id="IPR009000">
    <property type="entry name" value="Transl_B-barrel_sf"/>
</dbReference>
<dbReference type="InterPro" id="IPR009001">
    <property type="entry name" value="Transl_elong_EF1A/Init_IF2_C"/>
</dbReference>
<dbReference type="NCBIfam" id="TIGR02034">
    <property type="entry name" value="CysN"/>
    <property type="match status" value="1"/>
</dbReference>
<dbReference type="NCBIfam" id="NF003478">
    <property type="entry name" value="PRK05124.1"/>
    <property type="match status" value="1"/>
</dbReference>
<dbReference type="NCBIfam" id="TIGR00231">
    <property type="entry name" value="small_GTP"/>
    <property type="match status" value="1"/>
</dbReference>
<dbReference type="PANTHER" id="PTHR23115">
    <property type="entry name" value="TRANSLATION FACTOR"/>
    <property type="match status" value="1"/>
</dbReference>
<dbReference type="Pfam" id="PF22594">
    <property type="entry name" value="GTP-eEF1A_C"/>
    <property type="match status" value="1"/>
</dbReference>
<dbReference type="Pfam" id="PF00009">
    <property type="entry name" value="GTP_EFTU"/>
    <property type="match status" value="1"/>
</dbReference>
<dbReference type="PRINTS" id="PR00315">
    <property type="entry name" value="ELONGATNFCT"/>
</dbReference>
<dbReference type="SUPFAM" id="SSF50465">
    <property type="entry name" value="EF-Tu/eEF-1alpha/eIF2-gamma C-terminal domain"/>
    <property type="match status" value="1"/>
</dbReference>
<dbReference type="SUPFAM" id="SSF52540">
    <property type="entry name" value="P-loop containing nucleoside triphosphate hydrolases"/>
    <property type="match status" value="1"/>
</dbReference>
<dbReference type="SUPFAM" id="SSF50447">
    <property type="entry name" value="Translation proteins"/>
    <property type="match status" value="1"/>
</dbReference>
<dbReference type="PROSITE" id="PS00301">
    <property type="entry name" value="G_TR_1"/>
    <property type="match status" value="1"/>
</dbReference>
<dbReference type="PROSITE" id="PS51722">
    <property type="entry name" value="G_TR_2"/>
    <property type="match status" value="1"/>
</dbReference>
<sequence length="475" mass="52661">MNTTIAQQIAKEGGVEAYLHAQQHKSLLRFLTCGSVDDGKSTLIGRLLHDTRQIYEDQLSSLHNDSKRHGTQGEKLDLALLVDGLQAEREQGITIDVAYRYFSTEKRKFIIADTPGHEQYTRNMATGASTCDLAILLMDARKGVLDQTRRHSFISTLLGIKHLVVAVNKMDLVDFSEETFERIRQDYLTFAGQLPGNLDIRFVPLSALEGDNVAVQSQNMPWYTGPTLLEVLENIEIQRVVDEQPLRFPVQYVNRPNLDFRGYAGTVAGGVVKVGQRVKALPSGVESSVARIVTFDGDLEEAGAGEAVTLVLKDEIDISRGDLLVDASQTLAAVQSAAVDVVWMAEQPLVPGQSYDIKIAGKKTRARVDNIHYQVDINNLTQRVVENLPLNGIGLVDLTFDEPLNLDKYQENPVTGGLIFIDRLSNVTVGAGMVREPQQNVYQEPSAFSAFELELNQLIRRHFPHWGARDLLGGK</sequence>
<accession>A7MJ69</accession>
<comment type="function">
    <text evidence="2">With CysD forms the ATP sulfurylase (ATPS) that catalyzes the adenylation of sulfate producing adenosine 5'-phosphosulfate (APS) and diphosphate, the first enzymatic step in sulfur assimilation pathway. APS synthesis involves the formation of a high-energy phosphoric-sulfuric acid anhydride bond driven by GTP hydrolysis by CysN coupled to ATP hydrolysis by CysD.</text>
</comment>
<comment type="catalytic activity">
    <reaction evidence="2">
        <text>sulfate + ATP + H(+) = adenosine 5'-phosphosulfate + diphosphate</text>
        <dbReference type="Rhea" id="RHEA:18133"/>
        <dbReference type="ChEBI" id="CHEBI:15378"/>
        <dbReference type="ChEBI" id="CHEBI:16189"/>
        <dbReference type="ChEBI" id="CHEBI:30616"/>
        <dbReference type="ChEBI" id="CHEBI:33019"/>
        <dbReference type="ChEBI" id="CHEBI:58243"/>
        <dbReference type="EC" id="2.7.7.4"/>
    </reaction>
</comment>
<comment type="pathway">
    <text evidence="2">Sulfur metabolism; hydrogen sulfide biosynthesis; sulfite from sulfate: step 1/3.</text>
</comment>
<comment type="subunit">
    <text evidence="2">Heterodimer composed of CysD, the smaller subunit, and CysN.</text>
</comment>
<comment type="similarity">
    <text evidence="2">Belongs to the TRAFAC class translation factor GTPase superfamily. Classic translation factor GTPase family. CysN/NodQ subfamily.</text>
</comment>
<keyword id="KW-0067">ATP-binding</keyword>
<keyword id="KW-0342">GTP-binding</keyword>
<keyword id="KW-0547">Nucleotide-binding</keyword>
<keyword id="KW-0548">Nucleotidyltransferase</keyword>
<keyword id="KW-1185">Reference proteome</keyword>
<keyword id="KW-0808">Transferase</keyword>
<protein>
    <recommendedName>
        <fullName evidence="2">Sulfate adenylyltransferase subunit 1</fullName>
        <ecNumber evidence="2">2.7.7.4</ecNumber>
    </recommendedName>
    <alternativeName>
        <fullName evidence="2">ATP-sulfurylase large subunit</fullName>
    </alternativeName>
    <alternativeName>
        <fullName evidence="2">Sulfate adenylate transferase</fullName>
        <shortName evidence="2">SAT</shortName>
    </alternativeName>
</protein>